<protein>
    <recommendedName>
        <fullName evidence="1">Catalase-peroxidase</fullName>
        <shortName evidence="1">CP</shortName>
        <ecNumber evidence="1">1.11.1.21</ecNumber>
    </recommendedName>
    <alternativeName>
        <fullName evidence="1">Peroxidase/catalase</fullName>
    </alternativeName>
</protein>
<accession>Q1CLM4</accession>
<accession>C4GPW7</accession>
<name>KATG_YERPN</name>
<dbReference type="EC" id="1.11.1.21" evidence="1"/>
<dbReference type="EMBL" id="CP000305">
    <property type="protein sequence ID" value="ABG17106.1"/>
    <property type="molecule type" value="Genomic_DNA"/>
</dbReference>
<dbReference type="EMBL" id="ACNQ01000007">
    <property type="protein sequence ID" value="EEO77973.1"/>
    <property type="molecule type" value="Genomic_DNA"/>
</dbReference>
<dbReference type="RefSeq" id="WP_002209433.1">
    <property type="nucleotide sequence ID" value="NZ_ACNQ01000007.1"/>
</dbReference>
<dbReference type="SMR" id="Q1CLM4"/>
<dbReference type="GeneID" id="57975390"/>
<dbReference type="KEGG" id="ypn:YPN_0774"/>
<dbReference type="HOGENOM" id="CLU_025424_2_0_6"/>
<dbReference type="Proteomes" id="UP000008936">
    <property type="component" value="Chromosome"/>
</dbReference>
<dbReference type="GO" id="GO:0005829">
    <property type="term" value="C:cytosol"/>
    <property type="evidence" value="ECO:0007669"/>
    <property type="project" value="TreeGrafter"/>
</dbReference>
<dbReference type="GO" id="GO:0004096">
    <property type="term" value="F:catalase activity"/>
    <property type="evidence" value="ECO:0007669"/>
    <property type="project" value="UniProtKB-UniRule"/>
</dbReference>
<dbReference type="GO" id="GO:0020037">
    <property type="term" value="F:heme binding"/>
    <property type="evidence" value="ECO:0007669"/>
    <property type="project" value="InterPro"/>
</dbReference>
<dbReference type="GO" id="GO:0046872">
    <property type="term" value="F:metal ion binding"/>
    <property type="evidence" value="ECO:0007669"/>
    <property type="project" value="UniProtKB-KW"/>
</dbReference>
<dbReference type="GO" id="GO:0070301">
    <property type="term" value="P:cellular response to hydrogen peroxide"/>
    <property type="evidence" value="ECO:0007669"/>
    <property type="project" value="TreeGrafter"/>
</dbReference>
<dbReference type="GO" id="GO:0042744">
    <property type="term" value="P:hydrogen peroxide catabolic process"/>
    <property type="evidence" value="ECO:0007669"/>
    <property type="project" value="UniProtKB-KW"/>
</dbReference>
<dbReference type="CDD" id="cd00649">
    <property type="entry name" value="catalase_peroxidase_1"/>
    <property type="match status" value="1"/>
</dbReference>
<dbReference type="CDD" id="cd08200">
    <property type="entry name" value="catalase_peroxidase_2"/>
    <property type="match status" value="1"/>
</dbReference>
<dbReference type="FunFam" id="1.10.420.10:FF:000002">
    <property type="entry name" value="Catalase-peroxidase"/>
    <property type="match status" value="1"/>
</dbReference>
<dbReference type="FunFam" id="1.10.420.10:FF:000004">
    <property type="entry name" value="Catalase-peroxidase"/>
    <property type="match status" value="1"/>
</dbReference>
<dbReference type="FunFam" id="1.10.520.10:FF:000002">
    <property type="entry name" value="Catalase-peroxidase"/>
    <property type="match status" value="1"/>
</dbReference>
<dbReference type="Gene3D" id="1.10.520.10">
    <property type="match status" value="2"/>
</dbReference>
<dbReference type="Gene3D" id="1.10.420.10">
    <property type="entry name" value="Peroxidase, domain 2"/>
    <property type="match status" value="2"/>
</dbReference>
<dbReference type="HAMAP" id="MF_01961">
    <property type="entry name" value="Catal_peroxid"/>
    <property type="match status" value="1"/>
</dbReference>
<dbReference type="InterPro" id="IPR000763">
    <property type="entry name" value="Catalase_peroxidase"/>
</dbReference>
<dbReference type="InterPro" id="IPR002016">
    <property type="entry name" value="Haem_peroxidase"/>
</dbReference>
<dbReference type="InterPro" id="IPR010255">
    <property type="entry name" value="Haem_peroxidase_sf"/>
</dbReference>
<dbReference type="InterPro" id="IPR019794">
    <property type="entry name" value="Peroxidases_AS"/>
</dbReference>
<dbReference type="InterPro" id="IPR019793">
    <property type="entry name" value="Peroxidases_heam-ligand_BS"/>
</dbReference>
<dbReference type="NCBIfam" id="TIGR00198">
    <property type="entry name" value="cat_per_HPI"/>
    <property type="match status" value="1"/>
</dbReference>
<dbReference type="NCBIfam" id="NF011635">
    <property type="entry name" value="PRK15061.1"/>
    <property type="match status" value="1"/>
</dbReference>
<dbReference type="PANTHER" id="PTHR30555:SF0">
    <property type="entry name" value="CATALASE-PEROXIDASE"/>
    <property type="match status" value="1"/>
</dbReference>
<dbReference type="PANTHER" id="PTHR30555">
    <property type="entry name" value="HYDROPEROXIDASE I, BIFUNCTIONAL CATALASE-PEROXIDASE"/>
    <property type="match status" value="1"/>
</dbReference>
<dbReference type="Pfam" id="PF00141">
    <property type="entry name" value="peroxidase"/>
    <property type="match status" value="2"/>
</dbReference>
<dbReference type="PRINTS" id="PR00460">
    <property type="entry name" value="BPEROXIDASE"/>
</dbReference>
<dbReference type="PRINTS" id="PR00458">
    <property type="entry name" value="PEROXIDASE"/>
</dbReference>
<dbReference type="SUPFAM" id="SSF48113">
    <property type="entry name" value="Heme-dependent peroxidases"/>
    <property type="match status" value="2"/>
</dbReference>
<dbReference type="PROSITE" id="PS00435">
    <property type="entry name" value="PEROXIDASE_1"/>
    <property type="match status" value="1"/>
</dbReference>
<dbReference type="PROSITE" id="PS00436">
    <property type="entry name" value="PEROXIDASE_2"/>
    <property type="match status" value="1"/>
</dbReference>
<dbReference type="PROSITE" id="PS50873">
    <property type="entry name" value="PEROXIDASE_4"/>
    <property type="match status" value="1"/>
</dbReference>
<keyword id="KW-0349">Heme</keyword>
<keyword id="KW-0376">Hydrogen peroxide</keyword>
<keyword id="KW-0408">Iron</keyword>
<keyword id="KW-0479">Metal-binding</keyword>
<keyword id="KW-0560">Oxidoreductase</keyword>
<keyword id="KW-0575">Peroxidase</keyword>
<keyword id="KW-0732">Signal</keyword>
<feature type="signal peptide" evidence="1">
    <location>
        <begin position="1"/>
        <end position="23"/>
    </location>
</feature>
<feature type="chain" id="PRO_5000115157" description="Catalase-peroxidase">
    <location>
        <begin position="24"/>
        <end position="737"/>
    </location>
</feature>
<feature type="active site" description="Proton acceptor" evidence="1">
    <location>
        <position position="103"/>
    </location>
</feature>
<feature type="binding site" description="axial binding residue" evidence="1">
    <location>
        <position position="264"/>
    </location>
    <ligand>
        <name>heme b</name>
        <dbReference type="ChEBI" id="CHEBI:60344"/>
    </ligand>
    <ligandPart>
        <name>Fe</name>
        <dbReference type="ChEBI" id="CHEBI:18248"/>
    </ligandPart>
</feature>
<feature type="site" description="Transition state stabilizer" evidence="1">
    <location>
        <position position="99"/>
    </location>
</feature>
<feature type="cross-link" description="Tryptophyl-tyrosyl-methioninium (Trp-Tyr) (with M-249)" evidence="1">
    <location>
        <begin position="102"/>
        <end position="223"/>
    </location>
</feature>
<feature type="cross-link" description="Tryptophyl-tyrosyl-methioninium (Tyr-Met) (with W-102)" evidence="1">
    <location>
        <begin position="223"/>
        <end position="249"/>
    </location>
</feature>
<comment type="function">
    <text evidence="1">Bifunctional enzyme with both catalase and broad-spectrum peroxidase activity.</text>
</comment>
<comment type="catalytic activity">
    <reaction evidence="1">
        <text>H2O2 + AH2 = A + 2 H2O</text>
        <dbReference type="Rhea" id="RHEA:30275"/>
        <dbReference type="ChEBI" id="CHEBI:13193"/>
        <dbReference type="ChEBI" id="CHEBI:15377"/>
        <dbReference type="ChEBI" id="CHEBI:16240"/>
        <dbReference type="ChEBI" id="CHEBI:17499"/>
        <dbReference type="EC" id="1.11.1.21"/>
    </reaction>
</comment>
<comment type="catalytic activity">
    <reaction evidence="1">
        <text>2 H2O2 = O2 + 2 H2O</text>
        <dbReference type="Rhea" id="RHEA:20309"/>
        <dbReference type="ChEBI" id="CHEBI:15377"/>
        <dbReference type="ChEBI" id="CHEBI:15379"/>
        <dbReference type="ChEBI" id="CHEBI:16240"/>
        <dbReference type="EC" id="1.11.1.21"/>
    </reaction>
</comment>
<comment type="cofactor">
    <cofactor evidence="1">
        <name>heme b</name>
        <dbReference type="ChEBI" id="CHEBI:60344"/>
    </cofactor>
    <text evidence="1">Binds 1 heme b (iron(II)-protoporphyrin IX) group per dimer.</text>
</comment>
<comment type="subunit">
    <text evidence="1">Homodimer or homotetramer.</text>
</comment>
<comment type="PTM">
    <text evidence="1">Formation of the three residue Trp-Tyr-Met cross-link is important for the catalase, but not the peroxidase activity of the enzyme.</text>
</comment>
<comment type="similarity">
    <text evidence="1">Belongs to the peroxidase family. Peroxidase/catalase subfamily.</text>
</comment>
<gene>
    <name evidence="1" type="primary">katG</name>
    <name type="ordered locus">YPN_0774</name>
    <name type="ORF">YP516_0826</name>
</gene>
<proteinExistence type="inferred from homology"/>
<reference key="1">
    <citation type="journal article" date="2006" name="J. Bacteriol.">
        <title>Complete genome sequence of Yersinia pestis strains Antiqua and Nepal516: evidence of gene reduction in an emerging pathogen.</title>
        <authorList>
            <person name="Chain P.S.G."/>
            <person name="Hu P."/>
            <person name="Malfatti S.A."/>
            <person name="Radnedge L."/>
            <person name="Larimer F."/>
            <person name="Vergez L.M."/>
            <person name="Worsham P."/>
            <person name="Chu M.C."/>
            <person name="Andersen G.L."/>
        </authorList>
    </citation>
    <scope>NUCLEOTIDE SEQUENCE [LARGE SCALE GENOMIC DNA]</scope>
    <source>
        <strain>Nepal516</strain>
    </source>
</reference>
<reference key="2">
    <citation type="submission" date="2009-04" db="EMBL/GenBank/DDBJ databases">
        <title>Yersinia pestis Nepal516A whole genome shotgun sequencing project.</title>
        <authorList>
            <person name="Plunkett G. III"/>
            <person name="Anderson B.D."/>
            <person name="Baumler D.J."/>
            <person name="Burland V."/>
            <person name="Cabot E.L."/>
            <person name="Glasner J.D."/>
            <person name="Mau B."/>
            <person name="Neeno-Eckwall E."/>
            <person name="Perna N.T."/>
            <person name="Munk A.C."/>
            <person name="Tapia R."/>
            <person name="Green L.D."/>
            <person name="Rogers Y.C."/>
            <person name="Detter J.C."/>
            <person name="Bruce D.C."/>
            <person name="Brettin T.S."/>
        </authorList>
    </citation>
    <scope>NUCLEOTIDE SEQUENCE [LARGE SCALE GENOMIC DNA]</scope>
    <source>
        <strain>Nepal516</strain>
    </source>
</reference>
<organism>
    <name type="scientific">Yersinia pestis bv. Antiqua (strain Nepal516)</name>
    <dbReference type="NCBI Taxonomy" id="377628"/>
    <lineage>
        <taxon>Bacteria</taxon>
        <taxon>Pseudomonadati</taxon>
        <taxon>Pseudomonadota</taxon>
        <taxon>Gammaproteobacteria</taxon>
        <taxon>Enterobacterales</taxon>
        <taxon>Yersiniaceae</taxon>
        <taxon>Yersinia</taxon>
    </lineage>
</organism>
<sequence>MLKKILPVLITLAIVHNTPTAWAAEAPKTDSFYLPKSLDLSPLRLHNIESNPYGKDFNYAQQFKTLDLEAVKKDIKTVLTTSQDWWPADYGNYGPFFIRMAWHGAGTYRIYDGRGGADGGQQRFEPLNSWPDNANLDKARRLLWPIKKKYGAKISWGDLMVLTGNVALESMGFKTLGFAGGREDDWQSDLVYWGAGNKMLSDNRDKNGKLPKPLAATQMGLIYVNPEGPNGKPDPVAAAKDIREAFARMAMNDEETVALIAGGHTFGKAHGAASPEKCLGAAPGEAGLEQQGLGWANKCGSGNGKDTITSGLEGAWTTDPTHFTMQYLSNLYKHEWVLTKSPAGAWQWKPKNAANVVPDATDPTKFHPLMMFTTDIALKVDPEYKKITTRFLENPEEFKMAFARAWFKLTHRDMGPAARYLGDEVPKETFIWQDPLPAANYKMIDSADISELKDKILKTGLSDTKLIKTAWASASTFRGTDFRGGDNGARIRLAPQKDWPVNDPAELHSVLAALMEVQNNFNKDRSDGKKVSLSDLIVLGGNAAIEDAAKKAGYSISIPFTPGRTDASQEETDVSSFAVLEPTADGFRNYYDAKRNTLSPIASLIDRANKLELTVPEMTVLIGGLRVLDVNSGGSKAGVLTNTPGQLNNNFFVNLLDMSTKWTKSPKAEGYFDGYDRKTGKLKWTASSVDLVFGSNPELRAVAEVYASDDAKEKFVHDFTKVWEKVMNLDRFDIKNN</sequence>
<evidence type="ECO:0000255" key="1">
    <source>
        <dbReference type="HAMAP-Rule" id="MF_01961"/>
    </source>
</evidence>